<accession>Q9CLR7</accession>
<name>RL31_PASMU</name>
<reference key="1">
    <citation type="journal article" date="2001" name="Proc. Natl. Acad. Sci. U.S.A.">
        <title>Complete genomic sequence of Pasteurella multocida Pm70.</title>
        <authorList>
            <person name="May B.J."/>
            <person name="Zhang Q."/>
            <person name="Li L.L."/>
            <person name="Paustian M.L."/>
            <person name="Whittam T.S."/>
            <person name="Kapur V."/>
        </authorList>
    </citation>
    <scope>NUCLEOTIDE SEQUENCE [LARGE SCALE GENOMIC DNA]</scope>
    <source>
        <strain>Pm70</strain>
    </source>
</reference>
<sequence length="70" mass="7761">MKQGIHPNYVEVTATCSCGNVIKTRSTVGKDLNLDVCGNCHPFYTGKQRVVDTGGRVERFNKRFSIPSTK</sequence>
<organism>
    <name type="scientific">Pasteurella multocida (strain Pm70)</name>
    <dbReference type="NCBI Taxonomy" id="272843"/>
    <lineage>
        <taxon>Bacteria</taxon>
        <taxon>Pseudomonadati</taxon>
        <taxon>Pseudomonadota</taxon>
        <taxon>Gammaproteobacteria</taxon>
        <taxon>Pasteurellales</taxon>
        <taxon>Pasteurellaceae</taxon>
        <taxon>Pasteurella</taxon>
    </lineage>
</organism>
<protein>
    <recommendedName>
        <fullName evidence="1">Large ribosomal subunit protein bL31</fullName>
    </recommendedName>
    <alternativeName>
        <fullName evidence="2">50S ribosomal protein L31</fullName>
    </alternativeName>
</protein>
<dbReference type="EMBL" id="AE004439">
    <property type="protein sequence ID" value="AAK03226.1"/>
    <property type="molecule type" value="Genomic_DNA"/>
</dbReference>
<dbReference type="RefSeq" id="WP_005757276.1">
    <property type="nucleotide sequence ID" value="NC_002663.1"/>
</dbReference>
<dbReference type="SMR" id="Q9CLR7"/>
<dbReference type="STRING" id="272843.PM1142"/>
<dbReference type="EnsemblBacteria" id="AAK03226">
    <property type="protein sequence ID" value="AAK03226"/>
    <property type="gene ID" value="PM1142"/>
</dbReference>
<dbReference type="GeneID" id="77206458"/>
<dbReference type="KEGG" id="pmu:PM1142"/>
<dbReference type="HOGENOM" id="CLU_114306_4_3_6"/>
<dbReference type="OrthoDB" id="9803251at2"/>
<dbReference type="Proteomes" id="UP000000809">
    <property type="component" value="Chromosome"/>
</dbReference>
<dbReference type="GO" id="GO:1990904">
    <property type="term" value="C:ribonucleoprotein complex"/>
    <property type="evidence" value="ECO:0007669"/>
    <property type="project" value="UniProtKB-KW"/>
</dbReference>
<dbReference type="GO" id="GO:0005840">
    <property type="term" value="C:ribosome"/>
    <property type="evidence" value="ECO:0007669"/>
    <property type="project" value="UniProtKB-KW"/>
</dbReference>
<dbReference type="GO" id="GO:0046872">
    <property type="term" value="F:metal ion binding"/>
    <property type="evidence" value="ECO:0007669"/>
    <property type="project" value="UniProtKB-KW"/>
</dbReference>
<dbReference type="GO" id="GO:0019843">
    <property type="term" value="F:rRNA binding"/>
    <property type="evidence" value="ECO:0007669"/>
    <property type="project" value="UniProtKB-KW"/>
</dbReference>
<dbReference type="GO" id="GO:0003735">
    <property type="term" value="F:structural constituent of ribosome"/>
    <property type="evidence" value="ECO:0007669"/>
    <property type="project" value="InterPro"/>
</dbReference>
<dbReference type="GO" id="GO:0006412">
    <property type="term" value="P:translation"/>
    <property type="evidence" value="ECO:0007669"/>
    <property type="project" value="UniProtKB-UniRule"/>
</dbReference>
<dbReference type="FunFam" id="4.10.830.30:FF:000001">
    <property type="entry name" value="50S ribosomal protein L31"/>
    <property type="match status" value="1"/>
</dbReference>
<dbReference type="Gene3D" id="4.10.830.30">
    <property type="entry name" value="Ribosomal protein L31"/>
    <property type="match status" value="1"/>
</dbReference>
<dbReference type="HAMAP" id="MF_00501">
    <property type="entry name" value="Ribosomal_bL31_1"/>
    <property type="match status" value="1"/>
</dbReference>
<dbReference type="InterPro" id="IPR034704">
    <property type="entry name" value="Ribosomal_bL28/bL31-like_sf"/>
</dbReference>
<dbReference type="InterPro" id="IPR002150">
    <property type="entry name" value="Ribosomal_bL31"/>
</dbReference>
<dbReference type="InterPro" id="IPR027491">
    <property type="entry name" value="Ribosomal_bL31_A"/>
</dbReference>
<dbReference type="InterPro" id="IPR042105">
    <property type="entry name" value="Ribosomal_bL31_sf"/>
</dbReference>
<dbReference type="NCBIfam" id="TIGR00105">
    <property type="entry name" value="L31"/>
    <property type="match status" value="1"/>
</dbReference>
<dbReference type="NCBIfam" id="NF000612">
    <property type="entry name" value="PRK00019.1"/>
    <property type="match status" value="1"/>
</dbReference>
<dbReference type="NCBIfam" id="NF001809">
    <property type="entry name" value="PRK00528.1"/>
    <property type="match status" value="1"/>
</dbReference>
<dbReference type="PANTHER" id="PTHR33280">
    <property type="entry name" value="50S RIBOSOMAL PROTEIN L31, CHLOROPLASTIC"/>
    <property type="match status" value="1"/>
</dbReference>
<dbReference type="PANTHER" id="PTHR33280:SF6">
    <property type="entry name" value="LARGE RIBOSOMAL SUBUNIT PROTEIN BL31A"/>
    <property type="match status" value="1"/>
</dbReference>
<dbReference type="Pfam" id="PF01197">
    <property type="entry name" value="Ribosomal_L31"/>
    <property type="match status" value="1"/>
</dbReference>
<dbReference type="PRINTS" id="PR01249">
    <property type="entry name" value="RIBOSOMALL31"/>
</dbReference>
<dbReference type="SUPFAM" id="SSF143800">
    <property type="entry name" value="L28p-like"/>
    <property type="match status" value="1"/>
</dbReference>
<dbReference type="PROSITE" id="PS01143">
    <property type="entry name" value="RIBOSOMAL_L31"/>
    <property type="match status" value="1"/>
</dbReference>
<proteinExistence type="inferred from homology"/>
<feature type="chain" id="PRO_0000173140" description="Large ribosomal subunit protein bL31">
    <location>
        <begin position="1"/>
        <end position="70"/>
    </location>
</feature>
<feature type="binding site" evidence="1">
    <location>
        <position position="16"/>
    </location>
    <ligand>
        <name>Zn(2+)</name>
        <dbReference type="ChEBI" id="CHEBI:29105"/>
    </ligand>
</feature>
<feature type="binding site" evidence="1">
    <location>
        <position position="18"/>
    </location>
    <ligand>
        <name>Zn(2+)</name>
        <dbReference type="ChEBI" id="CHEBI:29105"/>
    </ligand>
</feature>
<feature type="binding site" evidence="1">
    <location>
        <position position="37"/>
    </location>
    <ligand>
        <name>Zn(2+)</name>
        <dbReference type="ChEBI" id="CHEBI:29105"/>
    </ligand>
</feature>
<feature type="binding site" evidence="1">
    <location>
        <position position="40"/>
    </location>
    <ligand>
        <name>Zn(2+)</name>
        <dbReference type="ChEBI" id="CHEBI:29105"/>
    </ligand>
</feature>
<evidence type="ECO:0000255" key="1">
    <source>
        <dbReference type="HAMAP-Rule" id="MF_00501"/>
    </source>
</evidence>
<evidence type="ECO:0000305" key="2"/>
<keyword id="KW-0479">Metal-binding</keyword>
<keyword id="KW-1185">Reference proteome</keyword>
<keyword id="KW-0687">Ribonucleoprotein</keyword>
<keyword id="KW-0689">Ribosomal protein</keyword>
<keyword id="KW-0694">RNA-binding</keyword>
<keyword id="KW-0699">rRNA-binding</keyword>
<keyword id="KW-0862">Zinc</keyword>
<gene>
    <name evidence="1" type="primary">rpmE</name>
    <name type="ordered locus">PM1142</name>
</gene>
<comment type="function">
    <text evidence="1">Binds the 23S rRNA.</text>
</comment>
<comment type="cofactor">
    <cofactor evidence="1">
        <name>Zn(2+)</name>
        <dbReference type="ChEBI" id="CHEBI:29105"/>
    </cofactor>
    <text evidence="1">Binds 1 zinc ion per subunit.</text>
</comment>
<comment type="subunit">
    <text evidence="1">Part of the 50S ribosomal subunit.</text>
</comment>
<comment type="similarity">
    <text evidence="1">Belongs to the bacterial ribosomal protein bL31 family. Type A subfamily.</text>
</comment>